<evidence type="ECO:0000256" key="1">
    <source>
        <dbReference type="SAM" id="MobiDB-lite"/>
    </source>
</evidence>
<evidence type="ECO:0000269" key="2">
    <source>
    </source>
</evidence>
<evidence type="ECO:0000269" key="3">
    <source>
    </source>
</evidence>
<evidence type="ECO:0000269" key="4">
    <source>
    </source>
</evidence>
<proteinExistence type="evidence at protein level"/>
<sequence>MDINSTSPLNASPQPDSPPPANASAFAHQLSGFQYSPPHAADSLLPQVEADSPYLDTRHPYSQYLDSAYPYPSPCEWQHDLYTRTRERSPHPSEQRPHARVLQGAPEHDQDQHLEAAGPREGSWQVGPSRSGPSQAGLSPSATPLNPSPPPHATDLETKHPYSQYLDWANPSLLDWQQDLHTRATASPAPLTAERGRSPQPSEQQPHARALQVPEYDQDLIWQRVDAAGPQAGPWQVGPSHSGPSQARPSHAWPSSSAGAEPAELSDFVMDSGVRAWDHWFLAPHMASEDQMSMLRATGLMPTAEVPTTTFLMMGMRHVAEFRGEGVIRIRPSVDFDI</sequence>
<reference key="1">
    <citation type="journal article" date="1997" name="Nature">
        <title>Molecular basis of symbiosis between Rhizobium and legumes.</title>
        <authorList>
            <person name="Freiberg C.A."/>
            <person name="Fellay R."/>
            <person name="Bairoch A."/>
            <person name="Broughton W.J."/>
            <person name="Rosenthal A."/>
            <person name="Perret X."/>
        </authorList>
    </citation>
    <scope>NUCLEOTIDE SEQUENCE [LARGE SCALE GENOMIC DNA]</scope>
    <source>
        <strain>NBRC 101917 / NGR234</strain>
    </source>
</reference>
<reference key="2">
    <citation type="journal article" date="2009" name="Appl. Environ. Microbiol.">
        <title>Rhizobium sp. strain NGR234 possesses a remarkable number of secretion systems.</title>
        <authorList>
            <person name="Schmeisser C."/>
            <person name="Liesegang H."/>
            <person name="Krysciak D."/>
            <person name="Bakkou N."/>
            <person name="Le Quere A."/>
            <person name="Wollherr A."/>
            <person name="Heinemeyer I."/>
            <person name="Morgenstern B."/>
            <person name="Pommerening-Roeser A."/>
            <person name="Flores M."/>
            <person name="Palacios R."/>
            <person name="Brenner S."/>
            <person name="Gottschalk G."/>
            <person name="Schmitz R.A."/>
            <person name="Broughton W.J."/>
            <person name="Perret X."/>
            <person name="Strittmatter A.W."/>
            <person name="Streit W.R."/>
        </authorList>
    </citation>
    <scope>NUCLEOTIDE SEQUENCE [LARGE SCALE GENOMIC DNA]</scope>
    <source>
        <strain>NBRC 101917 / NGR234</strain>
    </source>
</reference>
<reference key="3">
    <citation type="journal article" date="1998" name="Mol. Microbiol.">
        <title>Symbiotic implications of type III protein secretion machinery in Rhizobium.</title>
        <authorList>
            <person name="Viprey V."/>
            <person name="Del Greco A."/>
            <person name="Golinowski W."/>
            <person name="Broughton W.J."/>
            <person name="Perret X."/>
        </authorList>
    </citation>
    <scope>PROTEIN SEQUENCE OF 1-8</scope>
    <scope>SUBCELLULAR LOCATION</scope>
</reference>
<reference key="4">
    <citation type="journal article" date="2003" name="FEBS Lett.">
        <title>Purification and phosphorylation of the effector protein NopL from Rhizobium sp. NGR234.</title>
        <authorList>
            <person name="Bartsev A.V."/>
            <person name="Boukli N.M."/>
            <person name="Deakin W.J."/>
            <person name="Staehelin C."/>
            <person name="Broughton W.J."/>
        </authorList>
    </citation>
    <scope>FUNCTION</scope>
</reference>
<reference key="5">
    <citation type="journal article" date="2004" name="Plant Physiol.">
        <title>NopL, an effector protein of Rhizobium sp. NGR234, thwarts activation of plant defense reactions.</title>
        <authorList>
            <person name="Bartsev A.V."/>
            <person name="Deakin W.J."/>
            <person name="Boukli N.M."/>
            <person name="McAlvin C.B."/>
            <person name="Stacey G."/>
            <person name="Malnoe P."/>
            <person name="Broughton W.J."/>
            <person name="Staehelin C."/>
        </authorList>
    </citation>
    <scope>FUNCTION</scope>
</reference>
<feature type="chain" id="PRO_0000200967" description="Nodulation outer protein L">
    <location>
        <begin position="1"/>
        <end position="338"/>
    </location>
</feature>
<feature type="region of interest" description="Disordered" evidence="1">
    <location>
        <begin position="1"/>
        <end position="48"/>
    </location>
</feature>
<feature type="region of interest" description="Disordered" evidence="1">
    <location>
        <begin position="85"/>
        <end position="158"/>
    </location>
</feature>
<feature type="region of interest" description="Disordered" evidence="1">
    <location>
        <begin position="187"/>
        <end position="209"/>
    </location>
</feature>
<feature type="region of interest" description="Disordered" evidence="1">
    <location>
        <begin position="230"/>
        <end position="259"/>
    </location>
</feature>
<feature type="compositionally biased region" description="Polar residues" evidence="1">
    <location>
        <begin position="1"/>
        <end position="14"/>
    </location>
</feature>
<feature type="compositionally biased region" description="Basic and acidic residues" evidence="1">
    <location>
        <begin position="85"/>
        <end position="97"/>
    </location>
</feature>
<feature type="compositionally biased region" description="Polar residues" evidence="1">
    <location>
        <begin position="126"/>
        <end position="138"/>
    </location>
</feature>
<feature type="compositionally biased region" description="Polar residues" evidence="1">
    <location>
        <begin position="242"/>
        <end position="258"/>
    </location>
</feature>
<organism>
    <name type="scientific">Sinorhizobium fredii (strain NBRC 101917 / NGR234)</name>
    <dbReference type="NCBI Taxonomy" id="394"/>
    <lineage>
        <taxon>Bacteria</taxon>
        <taxon>Pseudomonadati</taxon>
        <taxon>Pseudomonadota</taxon>
        <taxon>Alphaproteobacteria</taxon>
        <taxon>Hyphomicrobiales</taxon>
        <taxon>Rhizobiaceae</taxon>
        <taxon>Sinorhizobium/Ensifer group</taxon>
        <taxon>Sinorhizobium</taxon>
    </lineage>
</organism>
<keyword id="KW-0903">Direct protein sequencing</keyword>
<keyword id="KW-0536">Nodulation</keyword>
<keyword id="KW-0614">Plasmid</keyword>
<keyword id="KW-1185">Reference proteome</keyword>
<keyword id="KW-0964">Secreted</keyword>
<geneLocation type="plasmid">
    <name>sym pNGR234a</name>
</geneLocation>
<comment type="function">
    <text evidence="2 3">Putative symbiotic effector that modulates nodulation in legumes. When delivered into the plant cell, modulates the activity of signal transduction pathways that culminate in activation of PR proteins.</text>
</comment>
<comment type="subcellular location">
    <subcellularLocation>
        <location evidence="4">Secreted</location>
    </subcellularLocation>
    <text>Secreted by the type II secretion system and delivered into the host plant cytoplasm.</text>
</comment>
<gene>
    <name type="primary">nopL</name>
    <name type="ordered locus">NGR_a00770</name>
    <name type="ORF">y4xL</name>
</gene>
<dbReference type="EMBL" id="U00090">
    <property type="protein sequence ID" value="AAB91935.1"/>
    <property type="molecule type" value="Genomic_DNA"/>
</dbReference>
<dbReference type="RefSeq" id="NP_444148.1">
    <property type="nucleotide sequence ID" value="NC_000914.2"/>
</dbReference>
<dbReference type="RefSeq" id="WP_010875118.1">
    <property type="nucleotide sequence ID" value="NC_000914.2"/>
</dbReference>
<dbReference type="KEGG" id="rhi:NGR_a00770"/>
<dbReference type="eggNOG" id="ENOG502ZQ5I">
    <property type="taxonomic scope" value="Bacteria"/>
</dbReference>
<dbReference type="HOGENOM" id="CLU_821038_0_0_5"/>
<dbReference type="OrthoDB" id="8278830at2"/>
<dbReference type="Proteomes" id="UP000001054">
    <property type="component" value="Plasmid pNGR234a"/>
</dbReference>
<dbReference type="GO" id="GO:0005576">
    <property type="term" value="C:extracellular region"/>
    <property type="evidence" value="ECO:0007669"/>
    <property type="project" value="UniProtKB-SubCell"/>
</dbReference>
<name>NOPL_SINFN</name>
<accession>P55704</accession>
<protein>
    <recommendedName>
        <fullName>Nodulation outer protein L</fullName>
    </recommendedName>
</protein>